<feature type="chain" id="PRO_0000334674" description="Putative uncharacterized protein FLJ45840">
    <location>
        <begin position="1"/>
        <end position="218"/>
    </location>
</feature>
<feature type="region of interest" description="Disordered" evidence="1">
    <location>
        <begin position="30"/>
        <end position="71"/>
    </location>
</feature>
<feature type="region of interest" description="Disordered" evidence="1">
    <location>
        <begin position="93"/>
        <end position="120"/>
    </location>
</feature>
<feature type="region of interest" description="Disordered" evidence="1">
    <location>
        <begin position="133"/>
        <end position="209"/>
    </location>
</feature>
<feature type="compositionally biased region" description="Low complexity" evidence="1">
    <location>
        <begin position="43"/>
        <end position="71"/>
    </location>
</feature>
<feature type="compositionally biased region" description="Gly residues" evidence="1">
    <location>
        <begin position="94"/>
        <end position="110"/>
    </location>
</feature>
<feature type="compositionally biased region" description="Pro residues" evidence="1">
    <location>
        <begin position="138"/>
        <end position="148"/>
    </location>
</feature>
<feature type="compositionally biased region" description="Gly residues" evidence="1">
    <location>
        <begin position="156"/>
        <end position="171"/>
    </location>
</feature>
<feature type="compositionally biased region" description="Low complexity" evidence="1">
    <location>
        <begin position="191"/>
        <end position="209"/>
    </location>
</feature>
<feature type="sequence conflict" description="In Ref. 1; AK127740." evidence="2" ref="1">
    <original>L</original>
    <variation>V</variation>
    <location>
        <position position="175"/>
    </location>
</feature>
<evidence type="ECO:0000256" key="1">
    <source>
        <dbReference type="SAM" id="MobiDB-lite"/>
    </source>
</evidence>
<evidence type="ECO:0000305" key="2"/>
<keyword id="KW-1185">Reference proteome</keyword>
<dbReference type="EMBL" id="AK127740">
    <property type="status" value="NOT_ANNOTATED_CDS"/>
    <property type="molecule type" value="mRNA"/>
</dbReference>
<dbReference type="EMBL" id="AL355336">
    <property type="status" value="NOT_ANNOTATED_CDS"/>
    <property type="molecule type" value="Genomic_DNA"/>
</dbReference>
<dbReference type="GlyGen" id="Q6ZS46">
    <property type="glycosylation" value="1 site"/>
</dbReference>
<dbReference type="BioMuta" id="-"/>
<dbReference type="MassIVE" id="Q6ZS46"/>
<dbReference type="neXtProt" id="NX_Q6ZS46"/>
<dbReference type="InParanoid" id="Q6ZS46"/>
<dbReference type="PAN-GO" id="Q6ZS46">
    <property type="GO annotations" value="0 GO annotations based on evolutionary models"/>
</dbReference>
<dbReference type="Pharos" id="Q6ZS46">
    <property type="development level" value="Tdark"/>
</dbReference>
<dbReference type="Proteomes" id="UP000005640">
    <property type="component" value="Unplaced"/>
</dbReference>
<dbReference type="RNAct" id="Q6ZS46">
    <property type="molecule type" value="protein"/>
</dbReference>
<proteinExistence type="uncertain"/>
<accession>Q6ZS46</accession>
<protein>
    <recommendedName>
        <fullName>Putative uncharacterized protein FLJ45840</fullName>
    </recommendedName>
</protein>
<sequence>MQTCSGKGIKMAFLDVQSSSTPQSLPLLLFSHREGGGRGAGDPGAPAVVPAPVSAPRPASSPARSESRSPPLTLISRHITCCSCESPGDVLLSGRGGGGGGGGGARTGGGEGEDRRPRPDFSRVTAVAIPGWMEVESPPHPPPQPQVCPTPSQGAPGHGRAGLPEGKGPGGRDWLRSQSSRCSRATLFGHRAPSPAAPRRGRLPAPGFPSLHSAVSLF</sequence>
<comment type="caution">
    <text evidence="2">Product of a dubious CDS prediction.</text>
</comment>
<reference key="1">
    <citation type="journal article" date="2004" name="Nat. Genet.">
        <title>Complete sequencing and characterization of 21,243 full-length human cDNAs.</title>
        <authorList>
            <person name="Ota T."/>
            <person name="Suzuki Y."/>
            <person name="Nishikawa T."/>
            <person name="Otsuki T."/>
            <person name="Sugiyama T."/>
            <person name="Irie R."/>
            <person name="Wakamatsu A."/>
            <person name="Hayashi K."/>
            <person name="Sato H."/>
            <person name="Nagai K."/>
            <person name="Kimura K."/>
            <person name="Makita H."/>
            <person name="Sekine M."/>
            <person name="Obayashi M."/>
            <person name="Nishi T."/>
            <person name="Shibahara T."/>
            <person name="Tanaka T."/>
            <person name="Ishii S."/>
            <person name="Yamamoto J."/>
            <person name="Saito K."/>
            <person name="Kawai Y."/>
            <person name="Isono Y."/>
            <person name="Nakamura Y."/>
            <person name="Nagahari K."/>
            <person name="Murakami K."/>
            <person name="Yasuda T."/>
            <person name="Iwayanagi T."/>
            <person name="Wagatsuma M."/>
            <person name="Shiratori A."/>
            <person name="Sudo H."/>
            <person name="Hosoiri T."/>
            <person name="Kaku Y."/>
            <person name="Kodaira H."/>
            <person name="Kondo H."/>
            <person name="Sugawara M."/>
            <person name="Takahashi M."/>
            <person name="Kanda K."/>
            <person name="Yokoi T."/>
            <person name="Furuya T."/>
            <person name="Kikkawa E."/>
            <person name="Omura Y."/>
            <person name="Abe K."/>
            <person name="Kamihara K."/>
            <person name="Katsuta N."/>
            <person name="Sato K."/>
            <person name="Tanikawa M."/>
            <person name="Yamazaki M."/>
            <person name="Ninomiya K."/>
            <person name="Ishibashi T."/>
            <person name="Yamashita H."/>
            <person name="Murakawa K."/>
            <person name="Fujimori K."/>
            <person name="Tanai H."/>
            <person name="Kimata M."/>
            <person name="Watanabe M."/>
            <person name="Hiraoka S."/>
            <person name="Chiba Y."/>
            <person name="Ishida S."/>
            <person name="Ono Y."/>
            <person name="Takiguchi S."/>
            <person name="Watanabe S."/>
            <person name="Yosida M."/>
            <person name="Hotuta T."/>
            <person name="Kusano J."/>
            <person name="Kanehori K."/>
            <person name="Takahashi-Fujii A."/>
            <person name="Hara H."/>
            <person name="Tanase T.-O."/>
            <person name="Nomura Y."/>
            <person name="Togiya S."/>
            <person name="Komai F."/>
            <person name="Hara R."/>
            <person name="Takeuchi K."/>
            <person name="Arita M."/>
            <person name="Imose N."/>
            <person name="Musashino K."/>
            <person name="Yuuki H."/>
            <person name="Oshima A."/>
            <person name="Sasaki N."/>
            <person name="Aotsuka S."/>
            <person name="Yoshikawa Y."/>
            <person name="Matsunawa H."/>
            <person name="Ichihara T."/>
            <person name="Shiohata N."/>
            <person name="Sano S."/>
            <person name="Moriya S."/>
            <person name="Momiyama H."/>
            <person name="Satoh N."/>
            <person name="Takami S."/>
            <person name="Terashima Y."/>
            <person name="Suzuki O."/>
            <person name="Nakagawa S."/>
            <person name="Senoh A."/>
            <person name="Mizoguchi H."/>
            <person name="Goto Y."/>
            <person name="Shimizu F."/>
            <person name="Wakebe H."/>
            <person name="Hishigaki H."/>
            <person name="Watanabe T."/>
            <person name="Sugiyama A."/>
            <person name="Takemoto M."/>
            <person name="Kawakami B."/>
            <person name="Yamazaki M."/>
            <person name="Watanabe K."/>
            <person name="Kumagai A."/>
            <person name="Itakura S."/>
            <person name="Fukuzumi Y."/>
            <person name="Fujimori Y."/>
            <person name="Komiyama M."/>
            <person name="Tashiro H."/>
            <person name="Tanigami A."/>
            <person name="Fujiwara T."/>
            <person name="Ono T."/>
            <person name="Yamada K."/>
            <person name="Fujii Y."/>
            <person name="Ozaki K."/>
            <person name="Hirao M."/>
            <person name="Ohmori Y."/>
            <person name="Kawabata A."/>
            <person name="Hikiji T."/>
            <person name="Kobatake N."/>
            <person name="Inagaki H."/>
            <person name="Ikema Y."/>
            <person name="Okamoto S."/>
            <person name="Okitani R."/>
            <person name="Kawakami T."/>
            <person name="Noguchi S."/>
            <person name="Itoh T."/>
            <person name="Shigeta K."/>
            <person name="Senba T."/>
            <person name="Matsumura K."/>
            <person name="Nakajima Y."/>
            <person name="Mizuno T."/>
            <person name="Morinaga M."/>
            <person name="Sasaki M."/>
            <person name="Togashi T."/>
            <person name="Oyama M."/>
            <person name="Hata H."/>
            <person name="Watanabe M."/>
            <person name="Komatsu T."/>
            <person name="Mizushima-Sugano J."/>
            <person name="Satoh T."/>
            <person name="Shirai Y."/>
            <person name="Takahashi Y."/>
            <person name="Nakagawa K."/>
            <person name="Okumura K."/>
            <person name="Nagase T."/>
            <person name="Nomura N."/>
            <person name="Kikuchi H."/>
            <person name="Masuho Y."/>
            <person name="Yamashita R."/>
            <person name="Nakai K."/>
            <person name="Yada T."/>
            <person name="Nakamura Y."/>
            <person name="Ohara O."/>
            <person name="Isogai T."/>
            <person name="Sugano S."/>
        </authorList>
    </citation>
    <scope>NUCLEOTIDE SEQUENCE [LARGE SCALE MRNA]</scope>
    <source>
        <tissue>Tongue</tissue>
    </source>
</reference>
<reference key="2">
    <citation type="journal article" date="2003" name="Nature">
        <title>The DNA sequence and analysis of human chromosome 6.</title>
        <authorList>
            <person name="Mungall A.J."/>
            <person name="Palmer S.A."/>
            <person name="Sims S.K."/>
            <person name="Edwards C.A."/>
            <person name="Ashurst J.L."/>
            <person name="Wilming L."/>
            <person name="Jones M.C."/>
            <person name="Horton R."/>
            <person name="Hunt S.E."/>
            <person name="Scott C.E."/>
            <person name="Gilbert J.G.R."/>
            <person name="Clamp M.E."/>
            <person name="Bethel G."/>
            <person name="Milne S."/>
            <person name="Ainscough R."/>
            <person name="Almeida J.P."/>
            <person name="Ambrose K.D."/>
            <person name="Andrews T.D."/>
            <person name="Ashwell R.I.S."/>
            <person name="Babbage A.K."/>
            <person name="Bagguley C.L."/>
            <person name="Bailey J."/>
            <person name="Banerjee R."/>
            <person name="Barker D.J."/>
            <person name="Barlow K.F."/>
            <person name="Bates K."/>
            <person name="Beare D.M."/>
            <person name="Beasley H."/>
            <person name="Beasley O."/>
            <person name="Bird C.P."/>
            <person name="Blakey S.E."/>
            <person name="Bray-Allen S."/>
            <person name="Brook J."/>
            <person name="Brown A.J."/>
            <person name="Brown J.Y."/>
            <person name="Burford D.C."/>
            <person name="Burrill W."/>
            <person name="Burton J."/>
            <person name="Carder C."/>
            <person name="Carter N.P."/>
            <person name="Chapman J.C."/>
            <person name="Clark S.Y."/>
            <person name="Clark G."/>
            <person name="Clee C.M."/>
            <person name="Clegg S."/>
            <person name="Cobley V."/>
            <person name="Collier R.E."/>
            <person name="Collins J.E."/>
            <person name="Colman L.K."/>
            <person name="Corby N.R."/>
            <person name="Coville G.J."/>
            <person name="Culley K.M."/>
            <person name="Dhami P."/>
            <person name="Davies J."/>
            <person name="Dunn M."/>
            <person name="Earthrowl M.E."/>
            <person name="Ellington A.E."/>
            <person name="Evans K.A."/>
            <person name="Faulkner L."/>
            <person name="Francis M.D."/>
            <person name="Frankish A."/>
            <person name="Frankland J."/>
            <person name="French L."/>
            <person name="Garner P."/>
            <person name="Garnett J."/>
            <person name="Ghori M.J."/>
            <person name="Gilby L.M."/>
            <person name="Gillson C.J."/>
            <person name="Glithero R.J."/>
            <person name="Grafham D.V."/>
            <person name="Grant M."/>
            <person name="Gribble S."/>
            <person name="Griffiths C."/>
            <person name="Griffiths M.N.D."/>
            <person name="Hall R."/>
            <person name="Halls K.S."/>
            <person name="Hammond S."/>
            <person name="Harley J.L."/>
            <person name="Hart E.A."/>
            <person name="Heath P.D."/>
            <person name="Heathcott R."/>
            <person name="Holmes S.J."/>
            <person name="Howden P.J."/>
            <person name="Howe K.L."/>
            <person name="Howell G.R."/>
            <person name="Huckle E."/>
            <person name="Humphray S.J."/>
            <person name="Humphries M.D."/>
            <person name="Hunt A.R."/>
            <person name="Johnson C.M."/>
            <person name="Joy A.A."/>
            <person name="Kay M."/>
            <person name="Keenan S.J."/>
            <person name="Kimberley A.M."/>
            <person name="King A."/>
            <person name="Laird G.K."/>
            <person name="Langford C."/>
            <person name="Lawlor S."/>
            <person name="Leongamornlert D.A."/>
            <person name="Leversha M."/>
            <person name="Lloyd C.R."/>
            <person name="Lloyd D.M."/>
            <person name="Loveland J.E."/>
            <person name="Lovell J."/>
            <person name="Martin S."/>
            <person name="Mashreghi-Mohammadi M."/>
            <person name="Maslen G.L."/>
            <person name="Matthews L."/>
            <person name="McCann O.T."/>
            <person name="McLaren S.J."/>
            <person name="McLay K."/>
            <person name="McMurray A."/>
            <person name="Moore M.J.F."/>
            <person name="Mullikin J.C."/>
            <person name="Niblett D."/>
            <person name="Nickerson T."/>
            <person name="Novik K.L."/>
            <person name="Oliver K."/>
            <person name="Overton-Larty E.K."/>
            <person name="Parker A."/>
            <person name="Patel R."/>
            <person name="Pearce A.V."/>
            <person name="Peck A.I."/>
            <person name="Phillimore B.J.C.T."/>
            <person name="Phillips S."/>
            <person name="Plumb R.W."/>
            <person name="Porter K.M."/>
            <person name="Ramsey Y."/>
            <person name="Ranby S.A."/>
            <person name="Rice C.M."/>
            <person name="Ross M.T."/>
            <person name="Searle S.M."/>
            <person name="Sehra H.K."/>
            <person name="Sheridan E."/>
            <person name="Skuce C.D."/>
            <person name="Smith S."/>
            <person name="Smith M."/>
            <person name="Spraggon L."/>
            <person name="Squares S.L."/>
            <person name="Steward C.A."/>
            <person name="Sycamore N."/>
            <person name="Tamlyn-Hall G."/>
            <person name="Tester J."/>
            <person name="Theaker A.J."/>
            <person name="Thomas D.W."/>
            <person name="Thorpe A."/>
            <person name="Tracey A."/>
            <person name="Tromans A."/>
            <person name="Tubby B."/>
            <person name="Wall M."/>
            <person name="Wallis J.M."/>
            <person name="West A.P."/>
            <person name="White S.S."/>
            <person name="Whitehead S.L."/>
            <person name="Whittaker H."/>
            <person name="Wild A."/>
            <person name="Willey D.J."/>
            <person name="Wilmer T.E."/>
            <person name="Wood J.M."/>
            <person name="Wray P.W."/>
            <person name="Wyatt J.C."/>
            <person name="Young L."/>
            <person name="Younger R.M."/>
            <person name="Bentley D.R."/>
            <person name="Coulson A."/>
            <person name="Durbin R.M."/>
            <person name="Hubbard T."/>
            <person name="Sulston J.E."/>
            <person name="Dunham I."/>
            <person name="Rogers J."/>
            <person name="Beck S."/>
        </authorList>
    </citation>
    <scope>NUCLEOTIDE SEQUENCE [LARGE SCALE GENOMIC DNA]</scope>
</reference>
<organism>
    <name type="scientific">Homo sapiens</name>
    <name type="common">Human</name>
    <dbReference type="NCBI Taxonomy" id="9606"/>
    <lineage>
        <taxon>Eukaryota</taxon>
        <taxon>Metazoa</taxon>
        <taxon>Chordata</taxon>
        <taxon>Craniata</taxon>
        <taxon>Vertebrata</taxon>
        <taxon>Euteleostomi</taxon>
        <taxon>Mammalia</taxon>
        <taxon>Eutheria</taxon>
        <taxon>Euarchontoglires</taxon>
        <taxon>Primates</taxon>
        <taxon>Haplorrhini</taxon>
        <taxon>Catarrhini</taxon>
        <taxon>Hominidae</taxon>
        <taxon>Homo</taxon>
    </lineage>
</organism>
<name>YF009_HUMAN</name>